<evidence type="ECO:0000255" key="1">
    <source>
        <dbReference type="HAMAP-Rule" id="MF_01524"/>
    </source>
</evidence>
<protein>
    <recommendedName>
        <fullName evidence="1">Crotonobetaine/carnitine--CoA ligase</fullName>
        <ecNumber evidence="1">6.2.1.48</ecNumber>
    </recommendedName>
</protein>
<feature type="chain" id="PRO_1000200917" description="Crotonobetaine/carnitine--CoA ligase">
    <location>
        <begin position="1"/>
        <end position="517"/>
    </location>
</feature>
<organism>
    <name type="scientific">Salmonella enteritidis PT4 (strain P125109)</name>
    <dbReference type="NCBI Taxonomy" id="550537"/>
    <lineage>
        <taxon>Bacteria</taxon>
        <taxon>Pseudomonadati</taxon>
        <taxon>Pseudomonadota</taxon>
        <taxon>Gammaproteobacteria</taxon>
        <taxon>Enterobacterales</taxon>
        <taxon>Enterobacteriaceae</taxon>
        <taxon>Salmonella</taxon>
    </lineage>
</organism>
<gene>
    <name evidence="1" type="primary">caiC</name>
    <name type="ordered locus">SEN0072</name>
</gene>
<name>CAIC_SALEP</name>
<accession>B5R1R0</accession>
<dbReference type="EC" id="6.2.1.48" evidence="1"/>
<dbReference type="EMBL" id="AM933172">
    <property type="protein sequence ID" value="CAR31661.1"/>
    <property type="molecule type" value="Genomic_DNA"/>
</dbReference>
<dbReference type="RefSeq" id="WP_000355818.1">
    <property type="nucleotide sequence ID" value="NC_011294.1"/>
</dbReference>
<dbReference type="SMR" id="B5R1R0"/>
<dbReference type="KEGG" id="set:SEN0072"/>
<dbReference type="HOGENOM" id="CLU_000022_59_0_6"/>
<dbReference type="UniPathway" id="UPA00117"/>
<dbReference type="Proteomes" id="UP000000613">
    <property type="component" value="Chromosome"/>
</dbReference>
<dbReference type="GO" id="GO:0051108">
    <property type="term" value="F:carnitine-CoA ligase activity"/>
    <property type="evidence" value="ECO:0007669"/>
    <property type="project" value="InterPro"/>
</dbReference>
<dbReference type="GO" id="GO:0051109">
    <property type="term" value="F:crotonobetaine-CoA ligase activity"/>
    <property type="evidence" value="ECO:0007669"/>
    <property type="project" value="InterPro"/>
</dbReference>
<dbReference type="GO" id="GO:0031956">
    <property type="term" value="F:medium-chain fatty acid-CoA ligase activity"/>
    <property type="evidence" value="ECO:0007669"/>
    <property type="project" value="TreeGrafter"/>
</dbReference>
<dbReference type="GO" id="GO:0009437">
    <property type="term" value="P:carnitine metabolic process"/>
    <property type="evidence" value="ECO:0007669"/>
    <property type="project" value="UniProtKB-UniRule"/>
</dbReference>
<dbReference type="GO" id="GO:0006631">
    <property type="term" value="P:fatty acid metabolic process"/>
    <property type="evidence" value="ECO:0007669"/>
    <property type="project" value="TreeGrafter"/>
</dbReference>
<dbReference type="CDD" id="cd05934">
    <property type="entry name" value="FACL_DitJ_like"/>
    <property type="match status" value="1"/>
</dbReference>
<dbReference type="FunFam" id="3.30.300.30:FF:000011">
    <property type="entry name" value="Crotonobetaine/carnitine--CoA ligase"/>
    <property type="match status" value="1"/>
</dbReference>
<dbReference type="Gene3D" id="3.30.300.30">
    <property type="match status" value="1"/>
</dbReference>
<dbReference type="Gene3D" id="3.40.50.12780">
    <property type="entry name" value="N-terminal domain of ligase-like"/>
    <property type="match status" value="1"/>
</dbReference>
<dbReference type="HAMAP" id="MF_01524">
    <property type="entry name" value="CaiC"/>
    <property type="match status" value="1"/>
</dbReference>
<dbReference type="InterPro" id="IPR025110">
    <property type="entry name" value="AMP-bd_C"/>
</dbReference>
<dbReference type="InterPro" id="IPR045851">
    <property type="entry name" value="AMP-bd_C_sf"/>
</dbReference>
<dbReference type="InterPro" id="IPR020845">
    <property type="entry name" value="AMP-binding_CS"/>
</dbReference>
<dbReference type="InterPro" id="IPR000873">
    <property type="entry name" value="AMP-dep_synth/lig_dom"/>
</dbReference>
<dbReference type="InterPro" id="IPR042099">
    <property type="entry name" value="ANL_N_sf"/>
</dbReference>
<dbReference type="InterPro" id="IPR023456">
    <property type="entry name" value="CaiC"/>
</dbReference>
<dbReference type="NCBIfam" id="NF005947">
    <property type="entry name" value="PRK08008.1"/>
    <property type="match status" value="1"/>
</dbReference>
<dbReference type="PANTHER" id="PTHR43201">
    <property type="entry name" value="ACYL-COA SYNTHETASE"/>
    <property type="match status" value="1"/>
</dbReference>
<dbReference type="PANTHER" id="PTHR43201:SF5">
    <property type="entry name" value="MEDIUM-CHAIN ACYL-COA LIGASE ACSF2, MITOCHONDRIAL"/>
    <property type="match status" value="1"/>
</dbReference>
<dbReference type="Pfam" id="PF00501">
    <property type="entry name" value="AMP-binding"/>
    <property type="match status" value="1"/>
</dbReference>
<dbReference type="Pfam" id="PF13193">
    <property type="entry name" value="AMP-binding_C"/>
    <property type="match status" value="1"/>
</dbReference>
<dbReference type="SUPFAM" id="SSF56801">
    <property type="entry name" value="Acetyl-CoA synthetase-like"/>
    <property type="match status" value="1"/>
</dbReference>
<dbReference type="PROSITE" id="PS00455">
    <property type="entry name" value="AMP_BINDING"/>
    <property type="match status" value="1"/>
</dbReference>
<comment type="function">
    <text evidence="1">Catalyzes the transfer of CoA to carnitine, generating the initial carnitinyl-CoA needed for the CaiB reaction cycle. Also has activity toward crotonobetaine and gamma-butyrobetaine.</text>
</comment>
<comment type="catalytic activity">
    <reaction evidence="1">
        <text>4-(trimethylamino)butanoate + ATP + CoA = 4-(trimethylamino)butanoyl-CoA + AMP + diphosphate</text>
        <dbReference type="Rhea" id="RHEA:55960"/>
        <dbReference type="ChEBI" id="CHEBI:16244"/>
        <dbReference type="ChEBI" id="CHEBI:30616"/>
        <dbReference type="ChEBI" id="CHEBI:33019"/>
        <dbReference type="ChEBI" id="CHEBI:57287"/>
        <dbReference type="ChEBI" id="CHEBI:61513"/>
        <dbReference type="ChEBI" id="CHEBI:456215"/>
        <dbReference type="EC" id="6.2.1.48"/>
    </reaction>
</comment>
<comment type="catalytic activity">
    <reaction evidence="1">
        <text>crotonobetaine + ATP + CoA = crotonobetainyl-CoA + AMP + diphosphate</text>
        <dbReference type="Rhea" id="RHEA:30079"/>
        <dbReference type="ChEBI" id="CHEBI:17237"/>
        <dbReference type="ChEBI" id="CHEBI:30616"/>
        <dbReference type="ChEBI" id="CHEBI:33019"/>
        <dbReference type="ChEBI" id="CHEBI:57287"/>
        <dbReference type="ChEBI" id="CHEBI:60933"/>
        <dbReference type="ChEBI" id="CHEBI:456215"/>
        <dbReference type="EC" id="6.2.1.48"/>
    </reaction>
</comment>
<comment type="catalytic activity">
    <reaction evidence="1">
        <text>(R)-carnitine + ATP + CoA = (R)-carnitinyl-CoA + AMP + diphosphate</text>
        <dbReference type="Rhea" id="RHEA:28514"/>
        <dbReference type="ChEBI" id="CHEBI:16347"/>
        <dbReference type="ChEBI" id="CHEBI:30616"/>
        <dbReference type="ChEBI" id="CHEBI:33019"/>
        <dbReference type="ChEBI" id="CHEBI:57287"/>
        <dbReference type="ChEBI" id="CHEBI:60932"/>
        <dbReference type="ChEBI" id="CHEBI:456215"/>
        <dbReference type="EC" id="6.2.1.48"/>
    </reaction>
</comment>
<comment type="pathway">
    <text evidence="1">Amine and polyamine metabolism; carnitine metabolism.</text>
</comment>
<comment type="similarity">
    <text evidence="1">Belongs to the ATP-dependent AMP-binding enzyme family.</text>
</comment>
<proteinExistence type="inferred from homology"/>
<keyword id="KW-0436">Ligase</keyword>
<sequence length="517" mass="58502">MDIVGGQNLRQMWDDLAGVYGDKTALIFESCEGIVRQFSYASLNEEINRTANLFYSLGIRKGDRVALHLDNCPEFIFCWFGLAKIGAIMVPINARLLGEESAWILQNSQVSLLVTSVQFYPMYREIRQDNSTPLNHICLIGEQLPADDGVSHFSQLQARQSATLCYTPALSTDDTAEILFTSGTTSRPKGVVITHYNLRFAGYYSAWQIALRDDDVYMTVMPAFHIDCQCTAAMPAFSAGSTFVLLEKYSARAFWDQVRKYQATVTECIPMMIRTLMVQPAAPTDRQHHLREVMFYLNLSEQEKDDFTERFGVRLLTSYGMTETIVGIIGDRPGDKRRWPSIGRVGFSYEAEIRDDQNRPLPAGEIGEICIKGIPGKTIFKEYYMQPEATARALEPEGWLHTGDSGYQDEDGYFYFVDRRCNMIKRGGENVSCVELENIISAHPKIQDIVVVGIKDAIRDEAIKAFIVLNEGETLSEAEFFSFCENNMAKFKVPSFMEIRTDLPRNCSGKIIKKNLK</sequence>
<reference key="1">
    <citation type="journal article" date="2008" name="Genome Res.">
        <title>Comparative genome analysis of Salmonella enteritidis PT4 and Salmonella gallinarum 287/91 provides insights into evolutionary and host adaptation pathways.</title>
        <authorList>
            <person name="Thomson N.R."/>
            <person name="Clayton D.J."/>
            <person name="Windhorst D."/>
            <person name="Vernikos G."/>
            <person name="Davidson S."/>
            <person name="Churcher C."/>
            <person name="Quail M.A."/>
            <person name="Stevens M."/>
            <person name="Jones M.A."/>
            <person name="Watson M."/>
            <person name="Barron A."/>
            <person name="Layton A."/>
            <person name="Pickard D."/>
            <person name="Kingsley R.A."/>
            <person name="Bignell A."/>
            <person name="Clark L."/>
            <person name="Harris B."/>
            <person name="Ormond D."/>
            <person name="Abdellah Z."/>
            <person name="Brooks K."/>
            <person name="Cherevach I."/>
            <person name="Chillingworth T."/>
            <person name="Woodward J."/>
            <person name="Norberczak H."/>
            <person name="Lord A."/>
            <person name="Arrowsmith C."/>
            <person name="Jagels K."/>
            <person name="Moule S."/>
            <person name="Mungall K."/>
            <person name="Saunders M."/>
            <person name="Whitehead S."/>
            <person name="Chabalgoity J.A."/>
            <person name="Maskell D."/>
            <person name="Humphreys T."/>
            <person name="Roberts M."/>
            <person name="Barrow P.A."/>
            <person name="Dougan G."/>
            <person name="Parkhill J."/>
        </authorList>
    </citation>
    <scope>NUCLEOTIDE SEQUENCE [LARGE SCALE GENOMIC DNA]</scope>
    <source>
        <strain>P125109</strain>
    </source>
</reference>